<name>TOTM_DROME</name>
<gene>
    <name evidence="5" type="primary">TotM</name>
    <name type="ORF">CG14027</name>
</gene>
<accession>Q9VMR8</accession>
<accession>Q962D7</accession>
<evidence type="ECO:0000255" key="1"/>
<evidence type="ECO:0000269" key="2">
    <source>
    </source>
</evidence>
<evidence type="ECO:0000269" key="3">
    <source>
    </source>
</evidence>
<evidence type="ECO:0000305" key="4"/>
<evidence type="ECO:0000312" key="5">
    <source>
        <dbReference type="EMBL" id="AAF52243.2"/>
    </source>
</evidence>
<evidence type="ECO:0000312" key="6">
    <source>
        <dbReference type="EMBL" id="AAK64525.1"/>
    </source>
</evidence>
<sequence>MNPTIYLSCLMVFSVFLLGKVNAENEDEFVTEKQRLFSVYGDSSVDEATKYRNIDSLVTFYDKYFTRLQLKPDLNTRAHDLLRRYKEENARVVLVDGTPAQGGFWLPLVKLLIVQLGVEIASEGVKRAIES</sequence>
<dbReference type="EMBL" id="AY035992">
    <property type="protein sequence ID" value="AAK64525.1"/>
    <property type="molecule type" value="mRNA"/>
</dbReference>
<dbReference type="EMBL" id="AE014134">
    <property type="protein sequence ID" value="AAF52243.2"/>
    <property type="molecule type" value="Genomic_DNA"/>
</dbReference>
<dbReference type="RefSeq" id="NP_001245887.1">
    <property type="nucleotide sequence ID" value="NM_001258958.1"/>
</dbReference>
<dbReference type="RefSeq" id="NP_523482.1">
    <property type="nucleotide sequence ID" value="NM_078758.3"/>
</dbReference>
<dbReference type="BioGRID" id="59934">
    <property type="interactions" value="2"/>
</dbReference>
<dbReference type="FunCoup" id="Q9VMR8">
    <property type="interactions" value="3"/>
</dbReference>
<dbReference type="IntAct" id="Q9VMR8">
    <property type="interactions" value="2"/>
</dbReference>
<dbReference type="STRING" id="7227.FBpp0078708"/>
<dbReference type="PaxDb" id="7227-FBpp0078708"/>
<dbReference type="DNASU" id="33764"/>
<dbReference type="EnsemblMetazoa" id="FBtr0079073">
    <property type="protein sequence ID" value="FBpp0078708"/>
    <property type="gene ID" value="FBgn0031701"/>
</dbReference>
<dbReference type="EnsemblMetazoa" id="FBtr0307036">
    <property type="protein sequence ID" value="FBpp0297879"/>
    <property type="gene ID" value="FBgn0031701"/>
</dbReference>
<dbReference type="GeneID" id="33764"/>
<dbReference type="KEGG" id="dme:Dmel_CG14027"/>
<dbReference type="UCSC" id="CG14027-RA">
    <property type="organism name" value="d. melanogaster"/>
</dbReference>
<dbReference type="AGR" id="FB:FBgn0031701"/>
<dbReference type="CTD" id="33764"/>
<dbReference type="FlyBase" id="FBgn0031701">
    <property type="gene designation" value="TotM"/>
</dbReference>
<dbReference type="VEuPathDB" id="VectorBase:FBgn0031701"/>
<dbReference type="GeneTree" id="ENSGT00540000073707"/>
<dbReference type="HOGENOM" id="CLU_158853_0_0_1"/>
<dbReference type="InParanoid" id="Q9VMR8"/>
<dbReference type="OMA" id="HIFRRYK"/>
<dbReference type="OrthoDB" id="7855545at2759"/>
<dbReference type="PhylomeDB" id="Q9VMR8"/>
<dbReference type="BioGRID-ORCS" id="33764">
    <property type="hits" value="0 hits in 1 CRISPR screen"/>
</dbReference>
<dbReference type="GenomeRNAi" id="33764"/>
<dbReference type="PRO" id="PR:Q9VMR8"/>
<dbReference type="Proteomes" id="UP000000803">
    <property type="component" value="Chromosome 2L"/>
</dbReference>
<dbReference type="Bgee" id="FBgn0031701">
    <property type="expression patterns" value="Expressed in adult abdomen and 39 other cell types or tissues"/>
</dbReference>
<dbReference type="ExpressionAtlas" id="Q9VMR8">
    <property type="expression patterns" value="baseline and differential"/>
</dbReference>
<dbReference type="GO" id="GO:0005576">
    <property type="term" value="C:extracellular region"/>
    <property type="evidence" value="ECO:0000255"/>
    <property type="project" value="FlyBase"/>
</dbReference>
<dbReference type="GO" id="GO:0005615">
    <property type="term" value="C:extracellular space"/>
    <property type="evidence" value="ECO:0000314"/>
    <property type="project" value="UniProtKB"/>
</dbReference>
<dbReference type="GO" id="GO:0034605">
    <property type="term" value="P:cellular response to heat"/>
    <property type="evidence" value="ECO:0000270"/>
    <property type="project" value="FlyBase"/>
</dbReference>
<dbReference type="GO" id="GO:0050830">
    <property type="term" value="P:defense response to Gram-positive bacterium"/>
    <property type="evidence" value="ECO:0000270"/>
    <property type="project" value="FlyBase"/>
</dbReference>
<dbReference type="GO" id="GO:0045087">
    <property type="term" value="P:innate immune response"/>
    <property type="evidence" value="ECO:0007669"/>
    <property type="project" value="UniProtKB-KW"/>
</dbReference>
<dbReference type="GO" id="GO:0009617">
    <property type="term" value="P:response to bacterium"/>
    <property type="evidence" value="ECO:0000270"/>
    <property type="project" value="FlyBase"/>
</dbReference>
<dbReference type="GO" id="GO:0009408">
    <property type="term" value="P:response to heat"/>
    <property type="evidence" value="ECO:0000314"/>
    <property type="project" value="UniProtKB"/>
</dbReference>
<dbReference type="InterPro" id="IPR010825">
    <property type="entry name" value="Turandot"/>
</dbReference>
<dbReference type="Pfam" id="PF07240">
    <property type="entry name" value="Turandot"/>
    <property type="match status" value="1"/>
</dbReference>
<keyword id="KW-0391">Immunity</keyword>
<keyword id="KW-0399">Innate immunity</keyword>
<keyword id="KW-1185">Reference proteome</keyword>
<keyword id="KW-0964">Secreted</keyword>
<keyword id="KW-0732">Signal</keyword>
<protein>
    <recommendedName>
        <fullName>Protein Turandot M</fullName>
    </recommendedName>
</protein>
<feature type="signal peptide" evidence="1">
    <location>
        <begin position="1"/>
        <end position="23"/>
    </location>
</feature>
<feature type="chain" id="PRO_0000354996" description="Protein Turandot M">
    <location>
        <begin position="24"/>
        <end position="131"/>
    </location>
</feature>
<proteinExistence type="evidence at transcript level"/>
<reference evidence="4 6" key="1">
    <citation type="journal article" date="2001" name="Biochem. Biophys. Res. Commun.">
        <title>A family of Turandot-related genes in the humoral stress response of Drosophila.</title>
        <authorList>
            <person name="Ekengren S."/>
            <person name="Hultmark D."/>
        </authorList>
    </citation>
    <scope>NUCLEOTIDE SEQUENCE [MRNA]</scope>
    <scope>POSSIBLE FUNCTION</scope>
    <scope>DEVELOPMENTAL STAGE</scope>
    <scope>INDUCTION</scope>
    <source>
        <strain evidence="6">Canton-S</strain>
        <tissue evidence="2">Embryo</tissue>
    </source>
</reference>
<reference key="2">
    <citation type="journal article" date="2000" name="Science">
        <title>The genome sequence of Drosophila melanogaster.</title>
        <authorList>
            <person name="Adams M.D."/>
            <person name="Celniker S.E."/>
            <person name="Holt R.A."/>
            <person name="Evans C.A."/>
            <person name="Gocayne J.D."/>
            <person name="Amanatides P.G."/>
            <person name="Scherer S.E."/>
            <person name="Li P.W."/>
            <person name="Hoskins R.A."/>
            <person name="Galle R.F."/>
            <person name="George R.A."/>
            <person name="Lewis S.E."/>
            <person name="Richards S."/>
            <person name="Ashburner M."/>
            <person name="Henderson S.N."/>
            <person name="Sutton G.G."/>
            <person name="Wortman J.R."/>
            <person name="Yandell M.D."/>
            <person name="Zhang Q."/>
            <person name="Chen L.X."/>
            <person name="Brandon R.C."/>
            <person name="Rogers Y.-H.C."/>
            <person name="Blazej R.G."/>
            <person name="Champe M."/>
            <person name="Pfeiffer B.D."/>
            <person name="Wan K.H."/>
            <person name="Doyle C."/>
            <person name="Baxter E.G."/>
            <person name="Helt G."/>
            <person name="Nelson C.R."/>
            <person name="Miklos G.L.G."/>
            <person name="Abril J.F."/>
            <person name="Agbayani A."/>
            <person name="An H.-J."/>
            <person name="Andrews-Pfannkoch C."/>
            <person name="Baldwin D."/>
            <person name="Ballew R.M."/>
            <person name="Basu A."/>
            <person name="Baxendale J."/>
            <person name="Bayraktaroglu L."/>
            <person name="Beasley E.M."/>
            <person name="Beeson K.Y."/>
            <person name="Benos P.V."/>
            <person name="Berman B.P."/>
            <person name="Bhandari D."/>
            <person name="Bolshakov S."/>
            <person name="Borkova D."/>
            <person name="Botchan M.R."/>
            <person name="Bouck J."/>
            <person name="Brokstein P."/>
            <person name="Brottier P."/>
            <person name="Burtis K.C."/>
            <person name="Busam D.A."/>
            <person name="Butler H."/>
            <person name="Cadieu E."/>
            <person name="Center A."/>
            <person name="Chandra I."/>
            <person name="Cherry J.M."/>
            <person name="Cawley S."/>
            <person name="Dahlke C."/>
            <person name="Davenport L.B."/>
            <person name="Davies P."/>
            <person name="de Pablos B."/>
            <person name="Delcher A."/>
            <person name="Deng Z."/>
            <person name="Mays A.D."/>
            <person name="Dew I."/>
            <person name="Dietz S.M."/>
            <person name="Dodson K."/>
            <person name="Doup L.E."/>
            <person name="Downes M."/>
            <person name="Dugan-Rocha S."/>
            <person name="Dunkov B.C."/>
            <person name="Dunn P."/>
            <person name="Durbin K.J."/>
            <person name="Evangelista C.C."/>
            <person name="Ferraz C."/>
            <person name="Ferriera S."/>
            <person name="Fleischmann W."/>
            <person name="Fosler C."/>
            <person name="Gabrielian A.E."/>
            <person name="Garg N.S."/>
            <person name="Gelbart W.M."/>
            <person name="Glasser K."/>
            <person name="Glodek A."/>
            <person name="Gong F."/>
            <person name="Gorrell J.H."/>
            <person name="Gu Z."/>
            <person name="Guan P."/>
            <person name="Harris M."/>
            <person name="Harris N.L."/>
            <person name="Harvey D.A."/>
            <person name="Heiman T.J."/>
            <person name="Hernandez J.R."/>
            <person name="Houck J."/>
            <person name="Hostin D."/>
            <person name="Houston K.A."/>
            <person name="Howland T.J."/>
            <person name="Wei M.-H."/>
            <person name="Ibegwam C."/>
            <person name="Jalali M."/>
            <person name="Kalush F."/>
            <person name="Karpen G.H."/>
            <person name="Ke Z."/>
            <person name="Kennison J.A."/>
            <person name="Ketchum K.A."/>
            <person name="Kimmel B.E."/>
            <person name="Kodira C.D."/>
            <person name="Kraft C.L."/>
            <person name="Kravitz S."/>
            <person name="Kulp D."/>
            <person name="Lai Z."/>
            <person name="Lasko P."/>
            <person name="Lei Y."/>
            <person name="Levitsky A.A."/>
            <person name="Li J.H."/>
            <person name="Li Z."/>
            <person name="Liang Y."/>
            <person name="Lin X."/>
            <person name="Liu X."/>
            <person name="Mattei B."/>
            <person name="McIntosh T.C."/>
            <person name="McLeod M.P."/>
            <person name="McPherson D."/>
            <person name="Merkulov G."/>
            <person name="Milshina N.V."/>
            <person name="Mobarry C."/>
            <person name="Morris J."/>
            <person name="Moshrefi A."/>
            <person name="Mount S.M."/>
            <person name="Moy M."/>
            <person name="Murphy B."/>
            <person name="Murphy L."/>
            <person name="Muzny D.M."/>
            <person name="Nelson D.L."/>
            <person name="Nelson D.R."/>
            <person name="Nelson K.A."/>
            <person name="Nixon K."/>
            <person name="Nusskern D.R."/>
            <person name="Pacleb J.M."/>
            <person name="Palazzolo M."/>
            <person name="Pittman G.S."/>
            <person name="Pan S."/>
            <person name="Pollard J."/>
            <person name="Puri V."/>
            <person name="Reese M.G."/>
            <person name="Reinert K."/>
            <person name="Remington K."/>
            <person name="Saunders R.D.C."/>
            <person name="Scheeler F."/>
            <person name="Shen H."/>
            <person name="Shue B.C."/>
            <person name="Siden-Kiamos I."/>
            <person name="Simpson M."/>
            <person name="Skupski M.P."/>
            <person name="Smith T.J."/>
            <person name="Spier E."/>
            <person name="Spradling A.C."/>
            <person name="Stapleton M."/>
            <person name="Strong R."/>
            <person name="Sun E."/>
            <person name="Svirskas R."/>
            <person name="Tector C."/>
            <person name="Turner R."/>
            <person name="Venter E."/>
            <person name="Wang A.H."/>
            <person name="Wang X."/>
            <person name="Wang Z.-Y."/>
            <person name="Wassarman D.A."/>
            <person name="Weinstock G.M."/>
            <person name="Weissenbach J."/>
            <person name="Williams S.M."/>
            <person name="Woodage T."/>
            <person name="Worley K.C."/>
            <person name="Wu D."/>
            <person name="Yang S."/>
            <person name="Yao Q.A."/>
            <person name="Ye J."/>
            <person name="Yeh R.-F."/>
            <person name="Zaveri J.S."/>
            <person name="Zhan M."/>
            <person name="Zhang G."/>
            <person name="Zhao Q."/>
            <person name="Zheng L."/>
            <person name="Zheng X.H."/>
            <person name="Zhong F.N."/>
            <person name="Zhong W."/>
            <person name="Zhou X."/>
            <person name="Zhu S.C."/>
            <person name="Zhu X."/>
            <person name="Smith H.O."/>
            <person name="Gibbs R.A."/>
            <person name="Myers E.W."/>
            <person name="Rubin G.M."/>
            <person name="Venter J.C."/>
        </authorList>
    </citation>
    <scope>NUCLEOTIDE SEQUENCE [LARGE SCALE GENOMIC DNA]</scope>
    <source>
        <strain>Berkeley</strain>
    </source>
</reference>
<reference evidence="4" key="3">
    <citation type="journal article" date="2002" name="Genome Biol.">
        <title>Annotation of the Drosophila melanogaster euchromatic genome: a systematic review.</title>
        <authorList>
            <person name="Misra S."/>
            <person name="Crosby M.A."/>
            <person name="Mungall C.J."/>
            <person name="Matthews B.B."/>
            <person name="Campbell K.S."/>
            <person name="Hradecky P."/>
            <person name="Huang Y."/>
            <person name="Kaminker J.S."/>
            <person name="Millburn G.H."/>
            <person name="Prochnik S.E."/>
            <person name="Smith C.D."/>
            <person name="Tupy J.L."/>
            <person name="Whitfield E.J."/>
            <person name="Bayraktaroglu L."/>
            <person name="Berman B.P."/>
            <person name="Bettencourt B.R."/>
            <person name="Celniker S.E."/>
            <person name="de Grey A.D.N.J."/>
            <person name="Drysdale R.A."/>
            <person name="Harris N.L."/>
            <person name="Richter J."/>
            <person name="Russo S."/>
            <person name="Schroeder A.J."/>
            <person name="Shu S.Q."/>
            <person name="Stapleton M."/>
            <person name="Yamada C."/>
            <person name="Ashburner M."/>
            <person name="Gelbart W.M."/>
            <person name="Rubin G.M."/>
            <person name="Lewis S.E."/>
        </authorList>
    </citation>
    <scope>GENOME REANNOTATION</scope>
    <source>
        <strain>Berkeley</strain>
    </source>
</reference>
<reference evidence="4" key="4">
    <citation type="journal article" date="2006" name="Genes Cells">
        <title>The MAPKKK Mekk1 regulates the expression of Turandot stress genes in response to septic injury in Drosophila.</title>
        <authorList>
            <person name="Brun S."/>
            <person name="Vidal S."/>
            <person name="Spellman P."/>
            <person name="Takahashi K."/>
            <person name="Tricoire H."/>
            <person name="Lemaitre B."/>
        </authorList>
    </citation>
    <scope>FUNCTION</scope>
</reference>
<organism>
    <name type="scientific">Drosophila melanogaster</name>
    <name type="common">Fruit fly</name>
    <dbReference type="NCBI Taxonomy" id="7227"/>
    <lineage>
        <taxon>Eukaryota</taxon>
        <taxon>Metazoa</taxon>
        <taxon>Ecdysozoa</taxon>
        <taxon>Arthropoda</taxon>
        <taxon>Hexapoda</taxon>
        <taxon>Insecta</taxon>
        <taxon>Pterygota</taxon>
        <taxon>Neoptera</taxon>
        <taxon>Endopterygota</taxon>
        <taxon>Diptera</taxon>
        <taxon>Brachycera</taxon>
        <taxon>Muscomorpha</taxon>
        <taxon>Ephydroidea</taxon>
        <taxon>Drosophilidae</taxon>
        <taxon>Drosophila</taxon>
        <taxon>Sophophora</taxon>
    </lineage>
</organism>
<comment type="function">
    <text evidence="2 3">A humoral factor that may play a role in stress tolerance. Requires Mekk1 expression in the fat body to regulate response to septic injury and consequent immune response.</text>
</comment>
<comment type="subcellular location">
    <subcellularLocation>
        <location evidence="2 4">Secreted</location>
    </subcellularLocation>
</comment>
<comment type="developmental stage">
    <text evidence="2">Expressed at very low levels.</text>
</comment>
<comment type="induction">
    <text evidence="2">By a variety of stressful conditions including bacterial infection and heat shock.</text>
</comment>
<comment type="similarity">
    <text evidence="1">Belongs to the Turandot family.</text>
</comment>